<feature type="signal peptide" evidence="1">
    <location>
        <begin position="1"/>
        <end position="21"/>
    </location>
</feature>
<feature type="chain" id="PRO_5000279908" description="Short neurotoxin 1">
    <location>
        <begin position="22"/>
        <end position="81"/>
    </location>
</feature>
<feature type="disulfide bond" evidence="2">
    <location>
        <begin position="24"/>
        <end position="43"/>
    </location>
</feature>
<feature type="disulfide bond" evidence="2">
    <location>
        <begin position="38"/>
        <end position="60"/>
    </location>
</feature>
<feature type="disulfide bond" evidence="2">
    <location>
        <begin position="62"/>
        <end position="73"/>
    </location>
</feature>
<feature type="disulfide bond" evidence="2">
    <location>
        <begin position="74"/>
        <end position="79"/>
    </location>
</feature>
<comment type="function">
    <text evidence="3">Binds to muscle nicotinic acetylcholine receptor (nAChR) and inhibit acetylcholine from binding to the receptor, thereby impairing neuromuscular transmission.</text>
</comment>
<comment type="subcellular location">
    <subcellularLocation>
        <location evidence="1">Secreted</location>
    </subcellularLocation>
</comment>
<comment type="tissue specificity">
    <text evidence="4">Expressed by the venom gland.</text>
</comment>
<comment type="similarity">
    <text evidence="4">Belongs to the three-finger toxin family. Short-chain subfamily. Type I alpha-neurotoxin sub-subfamily.</text>
</comment>
<organism>
    <name type="scientific">Tropidechis carinatus</name>
    <name type="common">Australian rough-scaled snake</name>
    <dbReference type="NCBI Taxonomy" id="100989"/>
    <lineage>
        <taxon>Eukaryota</taxon>
        <taxon>Metazoa</taxon>
        <taxon>Chordata</taxon>
        <taxon>Craniata</taxon>
        <taxon>Vertebrata</taxon>
        <taxon>Euteleostomi</taxon>
        <taxon>Lepidosauria</taxon>
        <taxon>Squamata</taxon>
        <taxon>Bifurcata</taxon>
        <taxon>Unidentata</taxon>
        <taxon>Episquamata</taxon>
        <taxon>Toxicofera</taxon>
        <taxon>Serpentes</taxon>
        <taxon>Colubroidea</taxon>
        <taxon>Elapidae</taxon>
        <taxon>Notechinae</taxon>
        <taxon>Tropidechis</taxon>
    </lineage>
</organism>
<accession>A8HDJ5</accession>
<evidence type="ECO:0000250" key="1"/>
<evidence type="ECO:0000250" key="2">
    <source>
        <dbReference type="UniProtKB" id="P0C1Z0"/>
    </source>
</evidence>
<evidence type="ECO:0000250" key="3">
    <source>
        <dbReference type="UniProtKB" id="P60775"/>
    </source>
</evidence>
<evidence type="ECO:0000305" key="4"/>
<keyword id="KW-0008">Acetylcholine receptor inhibiting toxin</keyword>
<keyword id="KW-1015">Disulfide bond</keyword>
<keyword id="KW-0872">Ion channel impairing toxin</keyword>
<keyword id="KW-0528">Neurotoxin</keyword>
<keyword id="KW-0629">Postsynaptic neurotoxin</keyword>
<keyword id="KW-0964">Secreted</keyword>
<keyword id="KW-0732">Signal</keyword>
<keyword id="KW-0800">Toxin</keyword>
<proteinExistence type="inferred from homology"/>
<sequence>MKTLLLTLVVVTIVCLDLGYTMTCCNQQSSQPKTTTPCAESSCYKKTWKDNRGTIIERGCGCPNVKPGIDLMCCKTDECNN</sequence>
<reference key="1">
    <citation type="journal article" date="2007" name="Cell. Mol. Life Sci.">
        <title>Distinct activities of novel neurotoxins from Australian venomous snakes for nicotinic acetylcholine receptors.</title>
        <authorList>
            <person name="St Pierre L."/>
            <person name="Fischer H."/>
            <person name="Adams D.J."/>
            <person name="Schenning M."/>
            <person name="Lavidis N."/>
            <person name="de Jersey J."/>
            <person name="Masci P.P."/>
            <person name="Lavin M.F."/>
        </authorList>
    </citation>
    <scope>NUCLEOTIDE SEQUENCE [MRNA]</scope>
    <source>
        <tissue>Venom gland</tissue>
    </source>
</reference>
<dbReference type="EMBL" id="DQ917500">
    <property type="protein sequence ID" value="ABK63529.1"/>
    <property type="molecule type" value="mRNA"/>
</dbReference>
<dbReference type="SMR" id="A8HDJ5"/>
<dbReference type="GO" id="GO:0005576">
    <property type="term" value="C:extracellular region"/>
    <property type="evidence" value="ECO:0007669"/>
    <property type="project" value="UniProtKB-SubCell"/>
</dbReference>
<dbReference type="GO" id="GO:0030550">
    <property type="term" value="F:acetylcholine receptor inhibitor activity"/>
    <property type="evidence" value="ECO:0007669"/>
    <property type="project" value="UniProtKB-KW"/>
</dbReference>
<dbReference type="GO" id="GO:0099106">
    <property type="term" value="F:ion channel regulator activity"/>
    <property type="evidence" value="ECO:0007669"/>
    <property type="project" value="UniProtKB-KW"/>
</dbReference>
<dbReference type="GO" id="GO:0090729">
    <property type="term" value="F:toxin activity"/>
    <property type="evidence" value="ECO:0007669"/>
    <property type="project" value="UniProtKB-KW"/>
</dbReference>
<dbReference type="CDD" id="cd00206">
    <property type="entry name" value="TFP_snake_toxin"/>
    <property type="match status" value="1"/>
</dbReference>
<dbReference type="Gene3D" id="2.10.60.10">
    <property type="entry name" value="CD59"/>
    <property type="match status" value="1"/>
</dbReference>
<dbReference type="InterPro" id="IPR003571">
    <property type="entry name" value="Snake_3FTx"/>
</dbReference>
<dbReference type="InterPro" id="IPR045860">
    <property type="entry name" value="Snake_toxin-like_sf"/>
</dbReference>
<dbReference type="InterPro" id="IPR018354">
    <property type="entry name" value="Snake_toxin_con_site"/>
</dbReference>
<dbReference type="InterPro" id="IPR054131">
    <property type="entry name" value="Toxin_cobra-type"/>
</dbReference>
<dbReference type="Pfam" id="PF21947">
    <property type="entry name" value="Toxin_cobra-type"/>
    <property type="match status" value="1"/>
</dbReference>
<dbReference type="SUPFAM" id="SSF57302">
    <property type="entry name" value="Snake toxin-like"/>
    <property type="match status" value="1"/>
</dbReference>
<dbReference type="PROSITE" id="PS00272">
    <property type="entry name" value="SNAKE_TOXIN"/>
    <property type="match status" value="1"/>
</dbReference>
<name>3S11_TROCA</name>
<protein>
    <recommendedName>
        <fullName>Short neurotoxin 1</fullName>
        <shortName>SNTX-1</shortName>
    </recommendedName>
</protein>